<reference key="1">
    <citation type="journal article" date="1983" name="Nucleic Acids Res.">
        <title>Molecular cloning and sequencing of mRNAs coding for minor adult globin polypeptides of Xenopus laevis.</title>
        <authorList>
            <person name="Knoechel W."/>
            <person name="Meyerhof W."/>
            <person name="Hummel S."/>
            <person name="Grundmann U."/>
        </authorList>
    </citation>
    <scope>NUCLEOTIDE SEQUENCE [MRNA]</scope>
</reference>
<reference key="2">
    <citation type="journal article" date="1988" name="J. Mol. Evol.">
        <title>Primary structure and evolutionary relationship between the adult alpha-globin genes and their 5'-flanking regions of Xenopus laevis and Xenopus tropicalis.</title>
        <authorList>
            <person name="Stalder J."/>
            <person name="Wirthmueller U."/>
            <person name="Beck J."/>
            <person name="Gruber A."/>
            <person name="Meyerhof W."/>
            <person name="Knoechel W."/>
            <person name="Weber R."/>
        </authorList>
    </citation>
    <scope>NUCLEOTIDE SEQUENCE [GENOMIC DNA]</scope>
</reference>
<gene>
    <name type="primary">hba2</name>
</gene>
<proteinExistence type="evidence at transcript level"/>
<protein>
    <recommendedName>
        <fullName>Hemoglobin subunit alpha-2</fullName>
    </recommendedName>
    <alternativeName>
        <fullName>Alpha-2-globin</fullName>
    </alternativeName>
    <alternativeName>
        <fullName>Hemoglobin alpha-2 chain</fullName>
    </alternativeName>
    <alternativeName>
        <fullName>Hemoglobin alpha-minor chain</fullName>
    </alternativeName>
</protein>
<name>HBA2_XENLA</name>
<keyword id="KW-0349">Heme</keyword>
<keyword id="KW-0408">Iron</keyword>
<keyword id="KW-0479">Metal-binding</keyword>
<keyword id="KW-0561">Oxygen transport</keyword>
<keyword id="KW-1185">Reference proteome</keyword>
<keyword id="KW-0813">Transport</keyword>
<comment type="function">
    <text>Involved in oxygen transport from the lung to the various peripheral tissues.</text>
</comment>
<comment type="subunit">
    <text>Heterotetramer of two alpha chains and two beta chains.</text>
</comment>
<comment type="tissue specificity">
    <text>Red blood cells.</text>
</comment>
<comment type="similarity">
    <text evidence="1">Belongs to the globin family.</text>
</comment>
<feature type="initiator methionine" description="Removed">
    <location>
        <position position="1"/>
    </location>
</feature>
<feature type="chain" id="PRO_0000052808" description="Hemoglobin subunit alpha-2">
    <location>
        <begin position="2"/>
        <end position="142"/>
    </location>
</feature>
<feature type="domain" description="Globin" evidence="1">
    <location>
        <begin position="2"/>
        <end position="142"/>
    </location>
</feature>
<feature type="binding site" evidence="1">
    <location>
        <position position="59"/>
    </location>
    <ligand>
        <name>O2</name>
        <dbReference type="ChEBI" id="CHEBI:15379"/>
    </ligand>
</feature>
<feature type="binding site" description="proximal binding residue" evidence="1">
    <location>
        <position position="88"/>
    </location>
    <ligand>
        <name>heme b</name>
        <dbReference type="ChEBI" id="CHEBI:60344"/>
    </ligand>
    <ligandPart>
        <name>Fe</name>
        <dbReference type="ChEBI" id="CHEBI:18248"/>
    </ligandPart>
</feature>
<feature type="sequence conflict" description="In Ref. 2; CAA32474." evidence="2" ref="2">
    <original>K</original>
    <variation>T</variation>
    <location>
        <position position="24"/>
    </location>
</feature>
<feature type="sequence conflict" description="In Ref. 2; CAA32474." evidence="2" ref="2">
    <original>S</original>
    <variation>L</variation>
    <location>
        <position position="30"/>
    </location>
</feature>
<evidence type="ECO:0000255" key="1">
    <source>
        <dbReference type="PROSITE-ProRule" id="PRU00238"/>
    </source>
</evidence>
<evidence type="ECO:0000305" key="2"/>
<organism>
    <name type="scientific">Xenopus laevis</name>
    <name type="common">African clawed frog</name>
    <dbReference type="NCBI Taxonomy" id="8355"/>
    <lineage>
        <taxon>Eukaryota</taxon>
        <taxon>Metazoa</taxon>
        <taxon>Chordata</taxon>
        <taxon>Craniata</taxon>
        <taxon>Vertebrata</taxon>
        <taxon>Euteleostomi</taxon>
        <taxon>Amphibia</taxon>
        <taxon>Batrachia</taxon>
        <taxon>Anura</taxon>
        <taxon>Pipoidea</taxon>
        <taxon>Pipidae</taxon>
        <taxon>Xenopodinae</taxon>
        <taxon>Xenopus</taxon>
        <taxon>Xenopus</taxon>
    </lineage>
</organism>
<accession>P02013</accession>
<sequence length="142" mass="15774">MLLSADDKKHIKAIMPSIAAHGDKFGGEASYRMFLVNPKTKTYFPSFDFHHNSKQITSHGKKVVDALNEAANHLDNIAGSMSKLSDLHAYDLRVDPGNFPLLAHNLLVVVAMHFPKQFDPATHKALDKFLATVSTVLTSKYR</sequence>
<dbReference type="EMBL" id="X01559">
    <property type="protein sequence ID" value="CAA25712.1"/>
    <property type="molecule type" value="mRNA"/>
</dbReference>
<dbReference type="EMBL" id="X14261">
    <property type="protein sequence ID" value="CAA32474.1"/>
    <property type="molecule type" value="Genomic_DNA"/>
</dbReference>
<dbReference type="PIR" id="A02342">
    <property type="entry name" value="HAXL2"/>
</dbReference>
<dbReference type="SMR" id="P02013"/>
<dbReference type="AGR" id="Xenbase:XB-GENE-865144"/>
<dbReference type="Xenbase" id="XB-GENE-865144">
    <property type="gene designation" value="hba1.S"/>
</dbReference>
<dbReference type="Proteomes" id="UP000186698">
    <property type="component" value="Unplaced"/>
</dbReference>
<dbReference type="GO" id="GO:0072562">
    <property type="term" value="C:blood microparticle"/>
    <property type="evidence" value="ECO:0007669"/>
    <property type="project" value="TreeGrafter"/>
</dbReference>
<dbReference type="GO" id="GO:0031838">
    <property type="term" value="C:haptoglobin-hemoglobin complex"/>
    <property type="evidence" value="ECO:0000318"/>
    <property type="project" value="GO_Central"/>
</dbReference>
<dbReference type="GO" id="GO:0005833">
    <property type="term" value="C:hemoglobin complex"/>
    <property type="evidence" value="ECO:0000318"/>
    <property type="project" value="GO_Central"/>
</dbReference>
<dbReference type="GO" id="GO:0031720">
    <property type="term" value="F:haptoglobin binding"/>
    <property type="evidence" value="ECO:0007669"/>
    <property type="project" value="TreeGrafter"/>
</dbReference>
<dbReference type="GO" id="GO:0020037">
    <property type="term" value="F:heme binding"/>
    <property type="evidence" value="ECO:0000318"/>
    <property type="project" value="GO_Central"/>
</dbReference>
<dbReference type="GO" id="GO:0046872">
    <property type="term" value="F:metal ion binding"/>
    <property type="evidence" value="ECO:0007669"/>
    <property type="project" value="UniProtKB-KW"/>
</dbReference>
<dbReference type="GO" id="GO:0043177">
    <property type="term" value="F:organic acid binding"/>
    <property type="evidence" value="ECO:0007669"/>
    <property type="project" value="TreeGrafter"/>
</dbReference>
<dbReference type="GO" id="GO:0019825">
    <property type="term" value="F:oxygen binding"/>
    <property type="evidence" value="ECO:0000318"/>
    <property type="project" value="GO_Central"/>
</dbReference>
<dbReference type="GO" id="GO:0005344">
    <property type="term" value="F:oxygen carrier activity"/>
    <property type="evidence" value="ECO:0000318"/>
    <property type="project" value="GO_Central"/>
</dbReference>
<dbReference type="GO" id="GO:0004601">
    <property type="term" value="F:peroxidase activity"/>
    <property type="evidence" value="ECO:0007669"/>
    <property type="project" value="TreeGrafter"/>
</dbReference>
<dbReference type="GO" id="GO:0042744">
    <property type="term" value="P:hydrogen peroxide catabolic process"/>
    <property type="evidence" value="ECO:0000318"/>
    <property type="project" value="GO_Central"/>
</dbReference>
<dbReference type="CDD" id="cd08927">
    <property type="entry name" value="Hb-alpha-like"/>
    <property type="match status" value="1"/>
</dbReference>
<dbReference type="FunFam" id="1.10.490.10:FF:000002">
    <property type="entry name" value="Hemoglobin subunit alpha"/>
    <property type="match status" value="1"/>
</dbReference>
<dbReference type="Gene3D" id="1.10.490.10">
    <property type="entry name" value="Globins"/>
    <property type="match status" value="1"/>
</dbReference>
<dbReference type="InterPro" id="IPR000971">
    <property type="entry name" value="Globin"/>
</dbReference>
<dbReference type="InterPro" id="IPR009050">
    <property type="entry name" value="Globin-like_sf"/>
</dbReference>
<dbReference type="InterPro" id="IPR012292">
    <property type="entry name" value="Globin/Proto"/>
</dbReference>
<dbReference type="InterPro" id="IPR002338">
    <property type="entry name" value="Hemoglobin_a-typ"/>
</dbReference>
<dbReference type="InterPro" id="IPR050056">
    <property type="entry name" value="Hemoglobin_oxygen_transport"/>
</dbReference>
<dbReference type="PANTHER" id="PTHR11442">
    <property type="entry name" value="HEMOGLOBIN FAMILY MEMBER"/>
    <property type="match status" value="1"/>
</dbReference>
<dbReference type="PANTHER" id="PTHR11442:SF48">
    <property type="entry name" value="HEMOGLOBIN SUBUNIT ALPHA"/>
    <property type="match status" value="1"/>
</dbReference>
<dbReference type="Pfam" id="PF00042">
    <property type="entry name" value="Globin"/>
    <property type="match status" value="1"/>
</dbReference>
<dbReference type="PRINTS" id="PR00612">
    <property type="entry name" value="ALPHAHAEM"/>
</dbReference>
<dbReference type="SUPFAM" id="SSF46458">
    <property type="entry name" value="Globin-like"/>
    <property type="match status" value="1"/>
</dbReference>
<dbReference type="PROSITE" id="PS01033">
    <property type="entry name" value="GLOBIN"/>
    <property type="match status" value="1"/>
</dbReference>